<gene>
    <name evidence="1" type="primary">rpsO</name>
    <name type="ordered locus">Psyc_0073</name>
</gene>
<dbReference type="EMBL" id="CP000082">
    <property type="protein sequence ID" value="AAZ17947.1"/>
    <property type="molecule type" value="Genomic_DNA"/>
</dbReference>
<dbReference type="RefSeq" id="WP_011279386.1">
    <property type="nucleotide sequence ID" value="NC_007204.1"/>
</dbReference>
<dbReference type="SMR" id="Q4FVL1"/>
<dbReference type="STRING" id="259536.Psyc_0073"/>
<dbReference type="KEGG" id="par:Psyc_0073"/>
<dbReference type="eggNOG" id="COG0184">
    <property type="taxonomic scope" value="Bacteria"/>
</dbReference>
<dbReference type="HOGENOM" id="CLU_148518_0_0_6"/>
<dbReference type="OrthoDB" id="9799262at2"/>
<dbReference type="Proteomes" id="UP000000546">
    <property type="component" value="Chromosome"/>
</dbReference>
<dbReference type="GO" id="GO:0022627">
    <property type="term" value="C:cytosolic small ribosomal subunit"/>
    <property type="evidence" value="ECO:0007669"/>
    <property type="project" value="TreeGrafter"/>
</dbReference>
<dbReference type="GO" id="GO:0019843">
    <property type="term" value="F:rRNA binding"/>
    <property type="evidence" value="ECO:0007669"/>
    <property type="project" value="UniProtKB-UniRule"/>
</dbReference>
<dbReference type="GO" id="GO:0003735">
    <property type="term" value="F:structural constituent of ribosome"/>
    <property type="evidence" value="ECO:0007669"/>
    <property type="project" value="InterPro"/>
</dbReference>
<dbReference type="GO" id="GO:0006412">
    <property type="term" value="P:translation"/>
    <property type="evidence" value="ECO:0007669"/>
    <property type="project" value="UniProtKB-UniRule"/>
</dbReference>
<dbReference type="CDD" id="cd00353">
    <property type="entry name" value="Ribosomal_S15p_S13e"/>
    <property type="match status" value="1"/>
</dbReference>
<dbReference type="FunFam" id="1.10.287.10:FF:000002">
    <property type="entry name" value="30S ribosomal protein S15"/>
    <property type="match status" value="1"/>
</dbReference>
<dbReference type="Gene3D" id="6.10.250.3130">
    <property type="match status" value="1"/>
</dbReference>
<dbReference type="Gene3D" id="1.10.287.10">
    <property type="entry name" value="S15/NS1, RNA-binding"/>
    <property type="match status" value="1"/>
</dbReference>
<dbReference type="HAMAP" id="MF_01343_B">
    <property type="entry name" value="Ribosomal_uS15_B"/>
    <property type="match status" value="1"/>
</dbReference>
<dbReference type="InterPro" id="IPR000589">
    <property type="entry name" value="Ribosomal_uS15"/>
</dbReference>
<dbReference type="InterPro" id="IPR005290">
    <property type="entry name" value="Ribosomal_uS15_bac-type"/>
</dbReference>
<dbReference type="InterPro" id="IPR009068">
    <property type="entry name" value="uS15_NS1_RNA-bd_sf"/>
</dbReference>
<dbReference type="NCBIfam" id="TIGR00952">
    <property type="entry name" value="S15_bact"/>
    <property type="match status" value="1"/>
</dbReference>
<dbReference type="PANTHER" id="PTHR23321">
    <property type="entry name" value="RIBOSOMAL PROTEIN S15, BACTERIAL AND ORGANELLAR"/>
    <property type="match status" value="1"/>
</dbReference>
<dbReference type="PANTHER" id="PTHR23321:SF26">
    <property type="entry name" value="SMALL RIBOSOMAL SUBUNIT PROTEIN US15M"/>
    <property type="match status" value="1"/>
</dbReference>
<dbReference type="Pfam" id="PF00312">
    <property type="entry name" value="Ribosomal_S15"/>
    <property type="match status" value="1"/>
</dbReference>
<dbReference type="SMART" id="SM01387">
    <property type="entry name" value="Ribosomal_S15"/>
    <property type="match status" value="1"/>
</dbReference>
<dbReference type="SUPFAM" id="SSF47060">
    <property type="entry name" value="S15/NS1 RNA-binding domain"/>
    <property type="match status" value="1"/>
</dbReference>
<dbReference type="PROSITE" id="PS00362">
    <property type="entry name" value="RIBOSOMAL_S15"/>
    <property type="match status" value="1"/>
</dbReference>
<sequence length="88" mass="10186">MLTNADREQIIAQYQRGESDTGSPEVQVALLSARINDLQNHFKAHKADHHSRRGLIRMVNTRRKLLDYLKSKDLGRYTTLISQLGLRR</sequence>
<accession>Q4FVL1</accession>
<comment type="function">
    <text evidence="1">One of the primary rRNA binding proteins, it binds directly to 16S rRNA where it helps nucleate assembly of the platform of the 30S subunit by binding and bridging several RNA helices of the 16S rRNA.</text>
</comment>
<comment type="function">
    <text evidence="1">Forms an intersubunit bridge (bridge B4) with the 23S rRNA of the 50S subunit in the ribosome.</text>
</comment>
<comment type="subunit">
    <text evidence="1">Part of the 30S ribosomal subunit. Forms a bridge to the 50S subunit in the 70S ribosome, contacting the 23S rRNA.</text>
</comment>
<comment type="similarity">
    <text evidence="1">Belongs to the universal ribosomal protein uS15 family.</text>
</comment>
<name>RS15_PSYA2</name>
<keyword id="KW-1185">Reference proteome</keyword>
<keyword id="KW-0687">Ribonucleoprotein</keyword>
<keyword id="KW-0689">Ribosomal protein</keyword>
<keyword id="KW-0694">RNA-binding</keyword>
<keyword id="KW-0699">rRNA-binding</keyword>
<evidence type="ECO:0000255" key="1">
    <source>
        <dbReference type="HAMAP-Rule" id="MF_01343"/>
    </source>
</evidence>
<evidence type="ECO:0000305" key="2"/>
<protein>
    <recommendedName>
        <fullName evidence="1">Small ribosomal subunit protein uS15</fullName>
    </recommendedName>
    <alternativeName>
        <fullName evidence="2">30S ribosomal protein S15</fullName>
    </alternativeName>
</protein>
<proteinExistence type="inferred from homology"/>
<feature type="chain" id="PRO_0000115517" description="Small ribosomal subunit protein uS15">
    <location>
        <begin position="1"/>
        <end position="88"/>
    </location>
</feature>
<reference key="1">
    <citation type="journal article" date="2010" name="Appl. Environ. Microbiol.">
        <title>The genome sequence of Psychrobacter arcticus 273-4, a psychroactive Siberian permafrost bacterium, reveals mechanisms for adaptation to low-temperature growth.</title>
        <authorList>
            <person name="Ayala-del-Rio H.L."/>
            <person name="Chain P.S."/>
            <person name="Grzymski J.J."/>
            <person name="Ponder M.A."/>
            <person name="Ivanova N."/>
            <person name="Bergholz P.W."/>
            <person name="Di Bartolo G."/>
            <person name="Hauser L."/>
            <person name="Land M."/>
            <person name="Bakermans C."/>
            <person name="Rodrigues D."/>
            <person name="Klappenbach J."/>
            <person name="Zarka D."/>
            <person name="Larimer F."/>
            <person name="Richardson P."/>
            <person name="Murray A."/>
            <person name="Thomashow M."/>
            <person name="Tiedje J.M."/>
        </authorList>
    </citation>
    <scope>NUCLEOTIDE SEQUENCE [LARGE SCALE GENOMIC DNA]</scope>
    <source>
        <strain>DSM 17307 / VKM B-2377 / 273-4</strain>
    </source>
</reference>
<organism>
    <name type="scientific">Psychrobacter arcticus (strain DSM 17307 / VKM B-2377 / 273-4)</name>
    <dbReference type="NCBI Taxonomy" id="259536"/>
    <lineage>
        <taxon>Bacteria</taxon>
        <taxon>Pseudomonadati</taxon>
        <taxon>Pseudomonadota</taxon>
        <taxon>Gammaproteobacteria</taxon>
        <taxon>Moraxellales</taxon>
        <taxon>Moraxellaceae</taxon>
        <taxon>Psychrobacter</taxon>
    </lineage>
</organism>